<accession>P31323</accession>
<accession>A4D0R9</accession>
<reference key="1">
    <citation type="journal article" date="1988" name="Mol. Endocrinol.">
        <title>Molecular cloning, complementary deoxyribonucleic acid structure and predicted full-length amino acid sequence of the hormone-inducible regulatory subunit of 3'-5'-cyclic adenosine monophosphate-dependent protein kinase from human testis.</title>
        <authorList>
            <person name="Levy F.O."/>
            <person name="Oeyen O."/>
            <person name="Sandberg M."/>
            <person name="Tasken K."/>
            <person name="Eskild W."/>
            <person name="Hansson V."/>
            <person name="Jahnsen T."/>
        </authorList>
    </citation>
    <scope>NUCLEOTIDE SEQUENCE [MRNA]</scope>
    <source>
        <tissue>Testis</tissue>
    </source>
</reference>
<reference key="2">
    <citation type="journal article" date="2004" name="Nat. Genet.">
        <title>Complete sequencing and characterization of 21,243 full-length human cDNAs.</title>
        <authorList>
            <person name="Ota T."/>
            <person name="Suzuki Y."/>
            <person name="Nishikawa T."/>
            <person name="Otsuki T."/>
            <person name="Sugiyama T."/>
            <person name="Irie R."/>
            <person name="Wakamatsu A."/>
            <person name="Hayashi K."/>
            <person name="Sato H."/>
            <person name="Nagai K."/>
            <person name="Kimura K."/>
            <person name="Makita H."/>
            <person name="Sekine M."/>
            <person name="Obayashi M."/>
            <person name="Nishi T."/>
            <person name="Shibahara T."/>
            <person name="Tanaka T."/>
            <person name="Ishii S."/>
            <person name="Yamamoto J."/>
            <person name="Saito K."/>
            <person name="Kawai Y."/>
            <person name="Isono Y."/>
            <person name="Nakamura Y."/>
            <person name="Nagahari K."/>
            <person name="Murakami K."/>
            <person name="Yasuda T."/>
            <person name="Iwayanagi T."/>
            <person name="Wagatsuma M."/>
            <person name="Shiratori A."/>
            <person name="Sudo H."/>
            <person name="Hosoiri T."/>
            <person name="Kaku Y."/>
            <person name="Kodaira H."/>
            <person name="Kondo H."/>
            <person name="Sugawara M."/>
            <person name="Takahashi M."/>
            <person name="Kanda K."/>
            <person name="Yokoi T."/>
            <person name="Furuya T."/>
            <person name="Kikkawa E."/>
            <person name="Omura Y."/>
            <person name="Abe K."/>
            <person name="Kamihara K."/>
            <person name="Katsuta N."/>
            <person name="Sato K."/>
            <person name="Tanikawa M."/>
            <person name="Yamazaki M."/>
            <person name="Ninomiya K."/>
            <person name="Ishibashi T."/>
            <person name="Yamashita H."/>
            <person name="Murakawa K."/>
            <person name="Fujimori K."/>
            <person name="Tanai H."/>
            <person name="Kimata M."/>
            <person name="Watanabe M."/>
            <person name="Hiraoka S."/>
            <person name="Chiba Y."/>
            <person name="Ishida S."/>
            <person name="Ono Y."/>
            <person name="Takiguchi S."/>
            <person name="Watanabe S."/>
            <person name="Yosida M."/>
            <person name="Hotuta T."/>
            <person name="Kusano J."/>
            <person name="Kanehori K."/>
            <person name="Takahashi-Fujii A."/>
            <person name="Hara H."/>
            <person name="Tanase T.-O."/>
            <person name="Nomura Y."/>
            <person name="Togiya S."/>
            <person name="Komai F."/>
            <person name="Hara R."/>
            <person name="Takeuchi K."/>
            <person name="Arita M."/>
            <person name="Imose N."/>
            <person name="Musashino K."/>
            <person name="Yuuki H."/>
            <person name="Oshima A."/>
            <person name="Sasaki N."/>
            <person name="Aotsuka S."/>
            <person name="Yoshikawa Y."/>
            <person name="Matsunawa H."/>
            <person name="Ichihara T."/>
            <person name="Shiohata N."/>
            <person name="Sano S."/>
            <person name="Moriya S."/>
            <person name="Momiyama H."/>
            <person name="Satoh N."/>
            <person name="Takami S."/>
            <person name="Terashima Y."/>
            <person name="Suzuki O."/>
            <person name="Nakagawa S."/>
            <person name="Senoh A."/>
            <person name="Mizoguchi H."/>
            <person name="Goto Y."/>
            <person name="Shimizu F."/>
            <person name="Wakebe H."/>
            <person name="Hishigaki H."/>
            <person name="Watanabe T."/>
            <person name="Sugiyama A."/>
            <person name="Takemoto M."/>
            <person name="Kawakami B."/>
            <person name="Yamazaki M."/>
            <person name="Watanabe K."/>
            <person name="Kumagai A."/>
            <person name="Itakura S."/>
            <person name="Fukuzumi Y."/>
            <person name="Fujimori Y."/>
            <person name="Komiyama M."/>
            <person name="Tashiro H."/>
            <person name="Tanigami A."/>
            <person name="Fujiwara T."/>
            <person name="Ono T."/>
            <person name="Yamada K."/>
            <person name="Fujii Y."/>
            <person name="Ozaki K."/>
            <person name="Hirao M."/>
            <person name="Ohmori Y."/>
            <person name="Kawabata A."/>
            <person name="Hikiji T."/>
            <person name="Kobatake N."/>
            <person name="Inagaki H."/>
            <person name="Ikema Y."/>
            <person name="Okamoto S."/>
            <person name="Okitani R."/>
            <person name="Kawakami T."/>
            <person name="Noguchi S."/>
            <person name="Itoh T."/>
            <person name="Shigeta K."/>
            <person name="Senba T."/>
            <person name="Matsumura K."/>
            <person name="Nakajima Y."/>
            <person name="Mizuno T."/>
            <person name="Morinaga M."/>
            <person name="Sasaki M."/>
            <person name="Togashi T."/>
            <person name="Oyama M."/>
            <person name="Hata H."/>
            <person name="Watanabe M."/>
            <person name="Komatsu T."/>
            <person name="Mizushima-Sugano J."/>
            <person name="Satoh T."/>
            <person name="Shirai Y."/>
            <person name="Takahashi Y."/>
            <person name="Nakagawa K."/>
            <person name="Okumura K."/>
            <person name="Nagase T."/>
            <person name="Nomura N."/>
            <person name="Kikuchi H."/>
            <person name="Masuho Y."/>
            <person name="Yamashita R."/>
            <person name="Nakai K."/>
            <person name="Yada T."/>
            <person name="Nakamura Y."/>
            <person name="Ohara O."/>
            <person name="Isogai T."/>
            <person name="Sugano S."/>
        </authorList>
    </citation>
    <scope>NUCLEOTIDE SEQUENCE [LARGE SCALE MRNA]</scope>
    <source>
        <tissue>Brain</tissue>
    </source>
</reference>
<reference key="3">
    <citation type="journal article" date="2003" name="Science">
        <title>Human chromosome 7: DNA sequence and biology.</title>
        <authorList>
            <person name="Scherer S.W."/>
            <person name="Cheung J."/>
            <person name="MacDonald J.R."/>
            <person name="Osborne L.R."/>
            <person name="Nakabayashi K."/>
            <person name="Herbrick J.-A."/>
            <person name="Carson A.R."/>
            <person name="Parker-Katiraee L."/>
            <person name="Skaug J."/>
            <person name="Khaja R."/>
            <person name="Zhang J."/>
            <person name="Hudek A.K."/>
            <person name="Li M."/>
            <person name="Haddad M."/>
            <person name="Duggan G.E."/>
            <person name="Fernandez B.A."/>
            <person name="Kanematsu E."/>
            <person name="Gentles S."/>
            <person name="Christopoulos C.C."/>
            <person name="Choufani S."/>
            <person name="Kwasnicka D."/>
            <person name="Zheng X.H."/>
            <person name="Lai Z."/>
            <person name="Nusskern D.R."/>
            <person name="Zhang Q."/>
            <person name="Gu Z."/>
            <person name="Lu F."/>
            <person name="Zeesman S."/>
            <person name="Nowaczyk M.J."/>
            <person name="Teshima I."/>
            <person name="Chitayat D."/>
            <person name="Shuman C."/>
            <person name="Weksberg R."/>
            <person name="Zackai E.H."/>
            <person name="Grebe T.A."/>
            <person name="Cox S.R."/>
            <person name="Kirkpatrick S.J."/>
            <person name="Rahman N."/>
            <person name="Friedman J.M."/>
            <person name="Heng H.H.Q."/>
            <person name="Pelicci P.G."/>
            <person name="Lo-Coco F."/>
            <person name="Belloni E."/>
            <person name="Shaffer L.G."/>
            <person name="Pober B."/>
            <person name="Morton C.C."/>
            <person name="Gusella J.F."/>
            <person name="Bruns G.A.P."/>
            <person name="Korf B.R."/>
            <person name="Quade B.J."/>
            <person name="Ligon A.H."/>
            <person name="Ferguson H."/>
            <person name="Higgins A.W."/>
            <person name="Leach N.T."/>
            <person name="Herrick S.R."/>
            <person name="Lemyre E."/>
            <person name="Farra C.G."/>
            <person name="Kim H.-G."/>
            <person name="Summers A.M."/>
            <person name="Gripp K.W."/>
            <person name="Roberts W."/>
            <person name="Szatmari P."/>
            <person name="Winsor E.J.T."/>
            <person name="Grzeschik K.-H."/>
            <person name="Teebi A."/>
            <person name="Minassian B.A."/>
            <person name="Kere J."/>
            <person name="Armengol L."/>
            <person name="Pujana M.A."/>
            <person name="Estivill X."/>
            <person name="Wilson M.D."/>
            <person name="Koop B.F."/>
            <person name="Tosi S."/>
            <person name="Moore G.E."/>
            <person name="Boright A.P."/>
            <person name="Zlotorynski E."/>
            <person name="Kerem B."/>
            <person name="Kroisel P.M."/>
            <person name="Petek E."/>
            <person name="Oscier D.G."/>
            <person name="Mould S.J."/>
            <person name="Doehner H."/>
            <person name="Doehner K."/>
            <person name="Rommens J.M."/>
            <person name="Vincent J.B."/>
            <person name="Venter J.C."/>
            <person name="Li P.W."/>
            <person name="Mural R.J."/>
            <person name="Adams M.D."/>
            <person name="Tsui L.-C."/>
        </authorList>
    </citation>
    <scope>NUCLEOTIDE SEQUENCE [LARGE SCALE GENOMIC DNA]</scope>
</reference>
<reference key="4">
    <citation type="submission" date="2005-07" db="EMBL/GenBank/DDBJ databases">
        <authorList>
            <person name="Mural R.J."/>
            <person name="Istrail S."/>
            <person name="Sutton G.G."/>
            <person name="Florea L."/>
            <person name="Halpern A.L."/>
            <person name="Mobarry C.M."/>
            <person name="Lippert R."/>
            <person name="Walenz B."/>
            <person name="Shatkay H."/>
            <person name="Dew I."/>
            <person name="Miller J.R."/>
            <person name="Flanigan M.J."/>
            <person name="Edwards N.J."/>
            <person name="Bolanos R."/>
            <person name="Fasulo D."/>
            <person name="Halldorsson B.V."/>
            <person name="Hannenhalli S."/>
            <person name="Turner R."/>
            <person name="Yooseph S."/>
            <person name="Lu F."/>
            <person name="Nusskern D.R."/>
            <person name="Shue B.C."/>
            <person name="Zheng X.H."/>
            <person name="Zhong F."/>
            <person name="Delcher A.L."/>
            <person name="Huson D.H."/>
            <person name="Kravitz S.A."/>
            <person name="Mouchard L."/>
            <person name="Reinert K."/>
            <person name="Remington K.A."/>
            <person name="Clark A.G."/>
            <person name="Waterman M.S."/>
            <person name="Eichler E.E."/>
            <person name="Adams M.D."/>
            <person name="Hunkapiller M.W."/>
            <person name="Myers E.W."/>
            <person name="Venter J.C."/>
        </authorList>
    </citation>
    <scope>NUCLEOTIDE SEQUENCE [LARGE SCALE GENOMIC DNA]</scope>
</reference>
<reference key="5">
    <citation type="journal article" date="2008" name="Proteomics">
        <title>Large-scale phosphoproteome analysis of human liver tissue by enrichment and fractionation of phosphopeptides with strong anion exchange chromatography.</title>
        <authorList>
            <person name="Han G."/>
            <person name="Ye M."/>
            <person name="Zhou H."/>
            <person name="Jiang X."/>
            <person name="Feng S."/>
            <person name="Jiang X."/>
            <person name="Tian R."/>
            <person name="Wan D."/>
            <person name="Zou H."/>
            <person name="Gu J."/>
        </authorList>
    </citation>
    <scope>PHOSPHORYLATION [LARGE SCALE ANALYSIS] AT SER-114</scope>
    <scope>IDENTIFICATION BY MASS SPECTROMETRY [LARGE SCALE ANALYSIS]</scope>
    <source>
        <tissue>Liver</tissue>
    </source>
</reference>
<reference key="6">
    <citation type="journal article" date="2009" name="Anal. Chem.">
        <title>Lys-N and trypsin cover complementary parts of the phosphoproteome in a refined SCX-based approach.</title>
        <authorList>
            <person name="Gauci S."/>
            <person name="Helbig A.O."/>
            <person name="Slijper M."/>
            <person name="Krijgsveld J."/>
            <person name="Heck A.J."/>
            <person name="Mohammed S."/>
        </authorList>
    </citation>
    <scope>IDENTIFICATION BY MASS SPECTROMETRY [LARGE SCALE ANALYSIS]</scope>
</reference>
<reference key="7">
    <citation type="journal article" date="2009" name="Sci. Signal.">
        <title>Quantitative phosphoproteomic analysis of T cell receptor signaling reveals system-wide modulation of protein-protein interactions.</title>
        <authorList>
            <person name="Mayya V."/>
            <person name="Lundgren D.H."/>
            <person name="Hwang S.-I."/>
            <person name="Rezaul K."/>
            <person name="Wu L."/>
            <person name="Eng J.K."/>
            <person name="Rodionov V."/>
            <person name="Han D.K."/>
        </authorList>
    </citation>
    <scope>PHOSPHORYLATION [LARGE SCALE ANALYSIS] AT SER-114</scope>
    <scope>IDENTIFICATION BY MASS SPECTROMETRY [LARGE SCALE ANALYSIS]</scope>
    <source>
        <tissue>Leukemic T-cell</tissue>
    </source>
</reference>
<reference key="8">
    <citation type="journal article" date="2011" name="BMC Syst. Biol.">
        <title>Initial characterization of the human central proteome.</title>
        <authorList>
            <person name="Burkard T.R."/>
            <person name="Planyavsky M."/>
            <person name="Kaupe I."/>
            <person name="Breitwieser F.P."/>
            <person name="Buerckstuemmer T."/>
            <person name="Bennett K.L."/>
            <person name="Superti-Furga G."/>
            <person name="Colinge J."/>
        </authorList>
    </citation>
    <scope>IDENTIFICATION BY MASS SPECTROMETRY [LARGE SCALE ANALYSIS]</scope>
</reference>
<reference key="9">
    <citation type="journal article" date="2011" name="Nat. Cell Biol.">
        <title>Control of PKA stability and signalling by the RING ligase praja2.</title>
        <authorList>
            <person name="Lignitto L."/>
            <person name="Carlucci A."/>
            <person name="Sepe M."/>
            <person name="Stefan E."/>
            <person name="Cuomo O."/>
            <person name="Nistico R."/>
            <person name="Scorziello A."/>
            <person name="Savoia C."/>
            <person name="Garbi C."/>
            <person name="Annunziato L."/>
            <person name="Feliciello A."/>
        </authorList>
    </citation>
    <scope>SUBCELLULAR LOCATION</scope>
    <scope>INTERACTION WITH PJA2</scope>
</reference>
<reference key="10">
    <citation type="journal article" date="2011" name="Sci. Signal.">
        <title>System-wide temporal characterization of the proteome and phosphoproteome of human embryonic stem cell differentiation.</title>
        <authorList>
            <person name="Rigbolt K.T."/>
            <person name="Prokhorova T.A."/>
            <person name="Akimov V."/>
            <person name="Henningsen J."/>
            <person name="Johansen P.T."/>
            <person name="Kratchmarova I."/>
            <person name="Kassem M."/>
            <person name="Mann M."/>
            <person name="Olsen J.V."/>
            <person name="Blagoev B."/>
        </authorList>
    </citation>
    <scope>PHOSPHORYLATION [LARGE SCALE ANALYSIS] AT SER-83; SER-85 AND SER-114</scope>
    <scope>IDENTIFICATION BY MASS SPECTROMETRY [LARGE SCALE ANALYSIS]</scope>
</reference>
<reference key="11">
    <citation type="journal article" date="2013" name="J. Proteome Res.">
        <title>Toward a comprehensive characterization of a human cancer cell phosphoproteome.</title>
        <authorList>
            <person name="Zhou H."/>
            <person name="Di Palma S."/>
            <person name="Preisinger C."/>
            <person name="Peng M."/>
            <person name="Polat A.N."/>
            <person name="Heck A.J."/>
            <person name="Mohammed S."/>
        </authorList>
    </citation>
    <scope>PHOSPHORYLATION [LARGE SCALE ANALYSIS] AT THR-69 AND SER-114</scope>
    <scope>IDENTIFICATION BY MASS SPECTROMETRY [LARGE SCALE ANALYSIS]</scope>
    <source>
        <tissue>Erythroleukemia</tissue>
    </source>
</reference>
<reference key="12">
    <citation type="journal article" date="2015" name="Biochim. Biophys. Acta">
        <title>GSKIP- and GSK3-mediated anchoring strengthens cAMP/PKA/Drp1 axis signaling in the regulation of mitochondrial elongation.</title>
        <authorList>
            <person name="Loh J.K."/>
            <person name="Lin C.C."/>
            <person name="Yang M.C."/>
            <person name="Chou C.H."/>
            <person name="Chen W.S."/>
            <person name="Hong M.C."/>
            <person name="Cho C.L."/>
            <person name="Hsu C.M."/>
            <person name="Cheng J.T."/>
            <person name="Chou A.K."/>
            <person name="Chang C.H."/>
            <person name="Tseng C.N."/>
            <person name="Wang C.H."/>
            <person name="Lieu A.S."/>
            <person name="Howng S.L."/>
            <person name="Hong Y.R."/>
        </authorList>
    </citation>
    <scope>INTERACTION WITH GSKIP</scope>
    <scope>COMPLEX FORMATION WITH GSK3B AND GSKIP</scope>
</reference>
<reference key="13">
    <citation type="journal article" date="2020" name="Am. J. Hum. Genet.">
        <title>Germline and Mosaic Variants in PRKACA and PRKACB Cause a Multiple Congenital Malformation Syndrome.</title>
        <authorList>
            <person name="Palencia-Campos A."/>
            <person name="Aoto P.C."/>
            <person name="Machal E.M.F."/>
            <person name="Rivera-Barahona A."/>
            <person name="Soto-Bielicka P."/>
            <person name="Bertinetti D."/>
            <person name="Baker B."/>
            <person name="Vu L."/>
            <person name="Piceci-Sparascio F."/>
            <person name="Torrente I."/>
            <person name="Boudin E."/>
            <person name="Peeters S."/>
            <person name="Van Hul W."/>
            <person name="Huber C."/>
            <person name="Bonneau D."/>
            <person name="Hildebrand M.S."/>
            <person name="Coleman M."/>
            <person name="Bahlo M."/>
            <person name="Bennett M.F."/>
            <person name="Schneider A.L."/>
            <person name="Scheffer I.E."/>
            <person name="Kibaek M."/>
            <person name="Kristiansen B.S."/>
            <person name="Issa M.Y."/>
            <person name="Mehrez M.I."/>
            <person name="Ismail S."/>
            <person name="Tenorio J."/>
            <person name="Li G."/>
            <person name="Skaalhegg B.S."/>
            <person name="Otaify G.A."/>
            <person name="Temtamy S."/>
            <person name="Aglan M."/>
            <person name="Joench A.E."/>
            <person name="De Luca A."/>
            <person name="Mortier G."/>
            <person name="Cormier-Daire V."/>
            <person name="Ziegler A."/>
            <person name="Wallis M."/>
            <person name="Lapunzina P."/>
            <person name="Herberg F.W."/>
            <person name="Taylor S.S."/>
            <person name="Ruiz-Perez V.L."/>
        </authorList>
    </citation>
    <scope>INTERACTION WITH PRKACA AND PRKACB</scope>
</reference>
<gene>
    <name type="primary">PRKAR2B</name>
</gene>
<comment type="function">
    <text>Regulatory subunit of the cAMP-dependent protein kinases involved in cAMP signaling in cells. Type II regulatory chains mediate membrane association by binding to anchoring proteins, including the MAP2 kinase.</text>
</comment>
<comment type="subunit">
    <text evidence="2 3 4">The inactive form of the enzyme is composed of two regulatory chains and two catalytic chains. Activation by cAMP produces two active catalytic monomers and a regulatory dimer that binds four cAMP molecules. Interacts with PRKACA and PRKACB (PubMed:33058759). Interacts with the phosphorylated form of PJA2. Forms a complex composed of PRKAR2B, GSK3B and GSKIP through GSKIP interaction; facilitates PKA-induced phosphorylation and regulates GSK3B activity (PubMed:25920809).</text>
</comment>
<comment type="interaction">
    <interactant intactId="EBI-2930670">
        <id>P31323</id>
    </interactant>
    <interactant intactId="EBI-16428921">
        <id>A0A0S2Z4Y8</id>
        <label>AKAP10</label>
    </interactant>
    <organismsDiffer>false</organismsDiffer>
    <experiments>3</experiments>
</comment>
<comment type="interaction">
    <interactant intactId="EBI-2930670">
        <id>P31323</id>
    </interactant>
    <interactant intactId="EBI-16431716">
        <id>A0A0S2Z551</id>
        <label>AKAP10</label>
    </interactant>
    <organismsDiffer>false</organismsDiffer>
    <experiments>3</experiments>
</comment>
<comment type="interaction">
    <interactant intactId="EBI-2930670">
        <id>P31323</id>
    </interactant>
    <interactant intactId="EBI-2119626">
        <id>Q86UN6</id>
        <label>AKAP14</label>
    </interactant>
    <organismsDiffer>false</organismsDiffer>
    <experiments>9</experiments>
</comment>
<comment type="interaction">
    <interactant intactId="EBI-2930670">
        <id>P31323</id>
    </interactant>
    <interactant intactId="EBI-703640">
        <id>P24588</id>
        <label>AKAP5</label>
    </interactant>
    <organismsDiffer>false</organismsDiffer>
    <experiments>5</experiments>
</comment>
<comment type="interaction">
    <interactant intactId="EBI-2930670">
        <id>P31323</id>
    </interactant>
    <interactant intactId="EBI-10185182">
        <id>O43687-2</id>
        <label>AKAP7</label>
    </interactant>
    <organismsDiffer>false</organismsDiffer>
    <experiments>8</experiments>
</comment>
<comment type="interaction">
    <interactant intactId="EBI-2930670">
        <id>P31323</id>
    </interactant>
    <interactant intactId="EBI-744298">
        <id>Q9BSF0</id>
        <label>C2orf88</label>
    </interactant>
    <organismsDiffer>false</organismsDiffer>
    <experiments>3</experiments>
</comment>
<comment type="interaction">
    <interactant intactId="EBI-2930670">
        <id>P31323</id>
    </interactant>
    <interactant intactId="EBI-947964">
        <id>Q16610</id>
        <label>ECM1</label>
    </interactant>
    <organismsDiffer>false</organismsDiffer>
    <experiments>3</experiments>
</comment>
<comment type="interaction">
    <interactant intactId="EBI-2930670">
        <id>P31323</id>
    </interactant>
    <interactant intactId="EBI-355878">
        <id>P33176</id>
        <label>KIF5B</label>
    </interactant>
    <organismsDiffer>false</organismsDiffer>
    <experiments>3</experiments>
</comment>
<comment type="interaction">
    <interactant intactId="EBI-2930670">
        <id>P31323</id>
    </interactant>
    <interactant intactId="EBI-16431731">
        <id>A0A0S2Z5D3</id>
        <label>PAK1IP1</label>
    </interactant>
    <organismsDiffer>false</organismsDiffer>
    <experiments>3</experiments>
</comment>
<comment type="interaction">
    <interactant intactId="EBI-2930670">
        <id>P31323</id>
    </interactant>
    <interactant intactId="EBI-476586">
        <id>P17612</id>
        <label>PRKACA</label>
    </interactant>
    <organismsDiffer>false</organismsDiffer>
    <experiments>18</experiments>
</comment>
<comment type="interaction">
    <interactant intactId="EBI-2930670">
        <id>P31323</id>
    </interactant>
    <interactant intactId="EBI-1034238">
        <id>Q16514</id>
        <label>TAF12</label>
    </interactant>
    <organismsDiffer>false</organismsDiffer>
    <experiments>3</experiments>
</comment>
<comment type="subcellular location">
    <subcellularLocation>
        <location evidence="2">Cytoplasm</location>
    </subcellularLocation>
    <subcellularLocation>
        <location evidence="2">Cell membrane</location>
    </subcellularLocation>
    <text>Colocalizes with PJA2 in the cytoplasm and at the cell membrane.</text>
</comment>
<comment type="tissue specificity">
    <text>Four types of regulatory chains are found: I-alpha, I-beta, II-alpha, and II-beta. Their expression varies among tissues and is in some cases constitutive and in others inducible.</text>
</comment>
<comment type="PTM">
    <text>Phosphorylated by the activated catalytic chain.</text>
</comment>
<comment type="similarity">
    <text evidence="5">Belongs to the cAMP-dependent kinase regulatory chain family.</text>
</comment>
<name>KAP3_HUMAN</name>
<dbReference type="EMBL" id="M31158">
    <property type="protein sequence ID" value="AAA60099.1"/>
    <property type="molecule type" value="mRNA"/>
</dbReference>
<dbReference type="EMBL" id="AK291441">
    <property type="protein sequence ID" value="BAF84130.1"/>
    <property type="molecule type" value="mRNA"/>
</dbReference>
<dbReference type="EMBL" id="CH236947">
    <property type="protein sequence ID" value="EAL24395.1"/>
    <property type="molecule type" value="Genomic_DNA"/>
</dbReference>
<dbReference type="EMBL" id="CH471070">
    <property type="protein sequence ID" value="EAW83390.1"/>
    <property type="molecule type" value="Genomic_DNA"/>
</dbReference>
<dbReference type="CCDS" id="CCDS5740.1"/>
<dbReference type="PIR" id="A40915">
    <property type="entry name" value="OKHUR2"/>
</dbReference>
<dbReference type="RefSeq" id="NP_002727.2">
    <property type="nucleotide sequence ID" value="NM_002736.2"/>
</dbReference>
<dbReference type="SMR" id="P31323"/>
<dbReference type="BioGRID" id="111563">
    <property type="interactions" value="148"/>
</dbReference>
<dbReference type="CORUM" id="P31323"/>
<dbReference type="DIP" id="DIP-554N"/>
<dbReference type="FunCoup" id="P31323">
    <property type="interactions" value="857"/>
</dbReference>
<dbReference type="IntAct" id="P31323">
    <property type="interactions" value="105"/>
</dbReference>
<dbReference type="MINT" id="P31323"/>
<dbReference type="STRING" id="9606.ENSP00000265717"/>
<dbReference type="BindingDB" id="P31323"/>
<dbReference type="ChEMBL" id="CHEMBL2270"/>
<dbReference type="DrugBank" id="DB02527">
    <property type="generic name" value="Cyclic adenosine monophosphate"/>
</dbReference>
<dbReference type="GuidetoPHARMACOLOGY" id="1475"/>
<dbReference type="GlyGen" id="P31323">
    <property type="glycosylation" value="1 site"/>
</dbReference>
<dbReference type="iPTMnet" id="P31323"/>
<dbReference type="MetOSite" id="P31323"/>
<dbReference type="PhosphoSitePlus" id="P31323"/>
<dbReference type="BioMuta" id="PRKAR2B"/>
<dbReference type="DMDM" id="206729918"/>
<dbReference type="OGP" id="P31323"/>
<dbReference type="jPOST" id="P31323"/>
<dbReference type="MassIVE" id="P31323"/>
<dbReference type="PaxDb" id="9606-ENSP00000265717"/>
<dbReference type="PeptideAtlas" id="P31323"/>
<dbReference type="ProteomicsDB" id="54781"/>
<dbReference type="Pumba" id="P31323"/>
<dbReference type="Antibodypedia" id="1082">
    <property type="antibodies" value="393 antibodies from 35 providers"/>
</dbReference>
<dbReference type="DNASU" id="5577"/>
<dbReference type="Ensembl" id="ENST00000265717.5">
    <property type="protein sequence ID" value="ENSP00000265717.4"/>
    <property type="gene ID" value="ENSG00000005249.14"/>
</dbReference>
<dbReference type="GeneID" id="5577"/>
<dbReference type="KEGG" id="hsa:5577"/>
<dbReference type="MANE-Select" id="ENST00000265717.5">
    <property type="protein sequence ID" value="ENSP00000265717.4"/>
    <property type="RefSeq nucleotide sequence ID" value="NM_002736.3"/>
    <property type="RefSeq protein sequence ID" value="NP_002727.2"/>
</dbReference>
<dbReference type="UCSC" id="uc003vdx.4">
    <property type="organism name" value="human"/>
</dbReference>
<dbReference type="AGR" id="HGNC:9392"/>
<dbReference type="CTD" id="5577"/>
<dbReference type="DisGeNET" id="5577"/>
<dbReference type="GeneCards" id="PRKAR2B"/>
<dbReference type="HGNC" id="HGNC:9392">
    <property type="gene designation" value="PRKAR2B"/>
</dbReference>
<dbReference type="HPA" id="ENSG00000005249">
    <property type="expression patterns" value="Tissue enhanced (adipose)"/>
</dbReference>
<dbReference type="MalaCards" id="PRKAR2B"/>
<dbReference type="MIM" id="176912">
    <property type="type" value="gene"/>
</dbReference>
<dbReference type="neXtProt" id="NX_P31323"/>
<dbReference type="OpenTargets" id="ENSG00000005249"/>
<dbReference type="PharmGKB" id="PA33758"/>
<dbReference type="VEuPathDB" id="HostDB:ENSG00000005249"/>
<dbReference type="eggNOG" id="KOG1113">
    <property type="taxonomic scope" value="Eukaryota"/>
</dbReference>
<dbReference type="GeneTree" id="ENSGT00940000158160"/>
<dbReference type="HOGENOM" id="CLU_018310_2_0_1"/>
<dbReference type="InParanoid" id="P31323"/>
<dbReference type="OMA" id="WSPPHHP"/>
<dbReference type="OrthoDB" id="417078at2759"/>
<dbReference type="PAN-GO" id="P31323">
    <property type="GO annotations" value="6 GO annotations based on evolutionary models"/>
</dbReference>
<dbReference type="PhylomeDB" id="P31323"/>
<dbReference type="TreeFam" id="TF314920"/>
<dbReference type="PathwayCommons" id="P31323"/>
<dbReference type="Reactome" id="R-HSA-163615">
    <property type="pathway name" value="PKA activation"/>
</dbReference>
<dbReference type="Reactome" id="R-HSA-164378">
    <property type="pathway name" value="PKA activation in glucagon signalling"/>
</dbReference>
<dbReference type="Reactome" id="R-HSA-180024">
    <property type="pathway name" value="DARPP-32 events"/>
</dbReference>
<dbReference type="Reactome" id="R-HSA-2565942">
    <property type="pathway name" value="Regulation of PLK1 Activity at G2/M Transition"/>
</dbReference>
<dbReference type="Reactome" id="R-HSA-380259">
    <property type="pathway name" value="Loss of Nlp from mitotic centrosomes"/>
</dbReference>
<dbReference type="Reactome" id="R-HSA-380270">
    <property type="pathway name" value="Recruitment of mitotic centrosome proteins and complexes"/>
</dbReference>
<dbReference type="Reactome" id="R-HSA-380284">
    <property type="pathway name" value="Loss of proteins required for interphase microtubule organization from the centrosome"/>
</dbReference>
<dbReference type="Reactome" id="R-HSA-380320">
    <property type="pathway name" value="Recruitment of NuMA to mitotic centrosomes"/>
</dbReference>
<dbReference type="Reactome" id="R-HSA-381676">
    <property type="pathway name" value="Glucagon-like Peptide-1 (GLP1) regulates insulin secretion"/>
</dbReference>
<dbReference type="Reactome" id="R-HSA-432040">
    <property type="pathway name" value="Vasopressin regulates renal water homeostasis via Aquaporins"/>
</dbReference>
<dbReference type="Reactome" id="R-HSA-442720">
    <property type="pathway name" value="CREB1 phosphorylation through the activation of Adenylate Cyclase"/>
</dbReference>
<dbReference type="Reactome" id="R-HSA-5610787">
    <property type="pathway name" value="Hedgehog 'off' state"/>
</dbReference>
<dbReference type="Reactome" id="R-HSA-5620912">
    <property type="pathway name" value="Anchoring of the basal body to the plasma membrane"/>
</dbReference>
<dbReference type="Reactome" id="R-HSA-8854518">
    <property type="pathway name" value="AURKA Activation by TPX2"/>
</dbReference>
<dbReference type="Reactome" id="R-HSA-9634597">
    <property type="pathway name" value="GPER1 signaling"/>
</dbReference>
<dbReference type="Reactome" id="R-HSA-9660821">
    <property type="pathway name" value="ADORA2B mediated anti-inflammatory cytokines production"/>
</dbReference>
<dbReference type="Reactome" id="R-HSA-9664323">
    <property type="pathway name" value="FCGR3A-mediated IL10 synthesis"/>
</dbReference>
<dbReference type="Reactome" id="R-HSA-983231">
    <property type="pathway name" value="Factors involved in megakaryocyte development and platelet production"/>
</dbReference>
<dbReference type="Reactome" id="R-HSA-9856530">
    <property type="pathway name" value="High laminar flow shear stress activates signaling by PIEZO1 and PECAM1:CDH5:KDR in endothelial cells"/>
</dbReference>
<dbReference type="SignaLink" id="P31323"/>
<dbReference type="SIGNOR" id="P31323"/>
<dbReference type="BioGRID-ORCS" id="5577">
    <property type="hits" value="12 hits in 1171 CRISPR screens"/>
</dbReference>
<dbReference type="CD-CODE" id="8C2F96ED">
    <property type="entry name" value="Centrosome"/>
</dbReference>
<dbReference type="CD-CODE" id="FB4E32DD">
    <property type="entry name" value="Presynaptic clusters and postsynaptic densities"/>
</dbReference>
<dbReference type="ChiTaRS" id="PRKAR2B">
    <property type="organism name" value="human"/>
</dbReference>
<dbReference type="GeneWiki" id="PRKAR2B"/>
<dbReference type="GenomeRNAi" id="5577"/>
<dbReference type="Pharos" id="P31323">
    <property type="development level" value="Tchem"/>
</dbReference>
<dbReference type="PRO" id="PR:P31323"/>
<dbReference type="Proteomes" id="UP000005640">
    <property type="component" value="Chromosome 7"/>
</dbReference>
<dbReference type="RNAct" id="P31323">
    <property type="molecule type" value="protein"/>
</dbReference>
<dbReference type="Bgee" id="ENSG00000005249">
    <property type="expression patterns" value="Expressed in cortical plate and 101 other cell types or tissues"/>
</dbReference>
<dbReference type="ExpressionAtlas" id="P31323">
    <property type="expression patterns" value="baseline and differential"/>
</dbReference>
<dbReference type="GO" id="GO:0005952">
    <property type="term" value="C:cAMP-dependent protein kinase complex"/>
    <property type="evidence" value="ECO:0000318"/>
    <property type="project" value="GO_Central"/>
</dbReference>
<dbReference type="GO" id="GO:0005813">
    <property type="term" value="C:centrosome"/>
    <property type="evidence" value="ECO:0000314"/>
    <property type="project" value="UniProtKB"/>
</dbReference>
<dbReference type="GO" id="GO:0097546">
    <property type="term" value="C:ciliary base"/>
    <property type="evidence" value="ECO:0000304"/>
    <property type="project" value="Reactome"/>
</dbReference>
<dbReference type="GO" id="GO:0005737">
    <property type="term" value="C:cytoplasm"/>
    <property type="evidence" value="ECO:0000314"/>
    <property type="project" value="UniProtKB"/>
</dbReference>
<dbReference type="GO" id="GO:0005829">
    <property type="term" value="C:cytosol"/>
    <property type="evidence" value="ECO:0000318"/>
    <property type="project" value="GO_Central"/>
</dbReference>
<dbReference type="GO" id="GO:0043198">
    <property type="term" value="C:dendritic shaft"/>
    <property type="evidence" value="ECO:0000250"/>
    <property type="project" value="ParkinsonsUK-UCL"/>
</dbReference>
<dbReference type="GO" id="GO:0043197">
    <property type="term" value="C:dendritic spine"/>
    <property type="evidence" value="ECO:0000250"/>
    <property type="project" value="ParkinsonsUK-UCL"/>
</dbReference>
<dbReference type="GO" id="GO:0070062">
    <property type="term" value="C:extracellular exosome"/>
    <property type="evidence" value="ECO:0007005"/>
    <property type="project" value="UniProtKB"/>
</dbReference>
<dbReference type="GO" id="GO:0098978">
    <property type="term" value="C:glutamatergic synapse"/>
    <property type="evidence" value="ECO:0007669"/>
    <property type="project" value="Ensembl"/>
</dbReference>
<dbReference type="GO" id="GO:0043025">
    <property type="term" value="C:neuronal cell body"/>
    <property type="evidence" value="ECO:0007669"/>
    <property type="project" value="Ensembl"/>
</dbReference>
<dbReference type="GO" id="GO:0048471">
    <property type="term" value="C:perinuclear region of cytoplasm"/>
    <property type="evidence" value="ECO:0007669"/>
    <property type="project" value="Ensembl"/>
</dbReference>
<dbReference type="GO" id="GO:0005886">
    <property type="term" value="C:plasma membrane"/>
    <property type="evidence" value="ECO:0000314"/>
    <property type="project" value="UniProtKB"/>
</dbReference>
<dbReference type="GO" id="GO:0030552">
    <property type="term" value="F:cAMP binding"/>
    <property type="evidence" value="ECO:0000318"/>
    <property type="project" value="GO_Central"/>
</dbReference>
<dbReference type="GO" id="GO:0004862">
    <property type="term" value="F:cAMP-dependent protein kinase inhibitor activity"/>
    <property type="evidence" value="ECO:0000314"/>
    <property type="project" value="BHF-UCL"/>
</dbReference>
<dbReference type="GO" id="GO:0008603">
    <property type="term" value="F:cAMP-dependent protein kinase regulator activity"/>
    <property type="evidence" value="ECO:0000314"/>
    <property type="project" value="BHF-UCL"/>
</dbReference>
<dbReference type="GO" id="GO:0019904">
    <property type="term" value="F:protein domain specific binding"/>
    <property type="evidence" value="ECO:0007669"/>
    <property type="project" value="Ensembl"/>
</dbReference>
<dbReference type="GO" id="GO:0034236">
    <property type="term" value="F:protein kinase A catalytic subunit binding"/>
    <property type="evidence" value="ECO:0000353"/>
    <property type="project" value="BHF-UCL"/>
</dbReference>
<dbReference type="GO" id="GO:0031625">
    <property type="term" value="F:ubiquitin protein ligase binding"/>
    <property type="evidence" value="ECO:0000314"/>
    <property type="project" value="UniProtKB"/>
</dbReference>
<dbReference type="GO" id="GO:0007189">
    <property type="term" value="P:adenylate cyclase-activating G protein-coupled receptor signaling pathway"/>
    <property type="evidence" value="ECO:0000318"/>
    <property type="project" value="GO_Central"/>
</dbReference>
<dbReference type="GO" id="GO:0006631">
    <property type="term" value="P:fatty acid metabolic process"/>
    <property type="evidence" value="ECO:0007669"/>
    <property type="project" value="Ensembl"/>
</dbReference>
<dbReference type="GO" id="GO:0035556">
    <property type="term" value="P:intracellular signal transduction"/>
    <property type="evidence" value="ECO:0000304"/>
    <property type="project" value="ProtInc"/>
</dbReference>
<dbReference type="GO" id="GO:0007612">
    <property type="term" value="P:learning"/>
    <property type="evidence" value="ECO:0007669"/>
    <property type="project" value="Ensembl"/>
</dbReference>
<dbReference type="GO" id="GO:0050804">
    <property type="term" value="P:modulation of chemical synaptic transmission"/>
    <property type="evidence" value="ECO:0007669"/>
    <property type="project" value="Ensembl"/>
</dbReference>
<dbReference type="GO" id="GO:0141162">
    <property type="term" value="P:negative regulation of cAMP/PKA signal transduction"/>
    <property type="evidence" value="ECO:0000314"/>
    <property type="project" value="BHF-UCL"/>
</dbReference>
<dbReference type="GO" id="GO:0097332">
    <property type="term" value="P:response to antipsychotic drug"/>
    <property type="evidence" value="ECO:0007669"/>
    <property type="project" value="Ensembl"/>
</dbReference>
<dbReference type="CDD" id="cd00038">
    <property type="entry name" value="CAP_ED"/>
    <property type="match status" value="2"/>
</dbReference>
<dbReference type="CDD" id="cd12104">
    <property type="entry name" value="DD_RIIbeta_PKA"/>
    <property type="match status" value="1"/>
</dbReference>
<dbReference type="FunFam" id="2.60.120.10:FF:000017">
    <property type="entry name" value="cAMP-dependent protein kinase type II regulatory subunit"/>
    <property type="match status" value="1"/>
</dbReference>
<dbReference type="FunFam" id="1.20.890.10:FF:000002">
    <property type="entry name" value="cAMP-dependent protein kinase type II-alpha regulatory subunit"/>
    <property type="match status" value="1"/>
</dbReference>
<dbReference type="FunFam" id="2.60.120.10:FF:000027">
    <property type="entry name" value="Protein kinase cAMP-dependent type II regulatory subunit alpha"/>
    <property type="match status" value="1"/>
</dbReference>
<dbReference type="Gene3D" id="1.20.890.10">
    <property type="entry name" value="cAMP-dependent protein kinase regulatory subunit, dimerization-anchoring domain"/>
    <property type="match status" value="1"/>
</dbReference>
<dbReference type="Gene3D" id="2.60.120.10">
    <property type="entry name" value="Jelly Rolls"/>
    <property type="match status" value="2"/>
</dbReference>
<dbReference type="InterPro" id="IPR050503">
    <property type="entry name" value="cAMP-dep_PK_reg_su-like"/>
</dbReference>
<dbReference type="InterPro" id="IPR012198">
    <property type="entry name" value="cAMP_dep_PK_reg_su"/>
</dbReference>
<dbReference type="InterPro" id="IPR003117">
    <property type="entry name" value="cAMP_dep_PK_reg_su_I/II_a/b"/>
</dbReference>
<dbReference type="InterPro" id="IPR018488">
    <property type="entry name" value="cNMP-bd_CS"/>
</dbReference>
<dbReference type="InterPro" id="IPR000595">
    <property type="entry name" value="cNMP-bd_dom"/>
</dbReference>
<dbReference type="InterPro" id="IPR018490">
    <property type="entry name" value="cNMP-bd_dom_sf"/>
</dbReference>
<dbReference type="InterPro" id="IPR014710">
    <property type="entry name" value="RmlC-like_jellyroll"/>
</dbReference>
<dbReference type="PANTHER" id="PTHR11635">
    <property type="entry name" value="CAMP-DEPENDENT PROTEIN KINASE REGULATORY CHAIN"/>
    <property type="match status" value="1"/>
</dbReference>
<dbReference type="PANTHER" id="PTHR11635:SF156">
    <property type="entry name" value="CAMP-DEPENDENT PROTEIN KINASE TYPE II-BETA REGULATORY SUBUNIT"/>
    <property type="match status" value="1"/>
</dbReference>
<dbReference type="Pfam" id="PF00027">
    <property type="entry name" value="cNMP_binding"/>
    <property type="match status" value="2"/>
</dbReference>
<dbReference type="Pfam" id="PF02197">
    <property type="entry name" value="RIIa"/>
    <property type="match status" value="1"/>
</dbReference>
<dbReference type="PIRSF" id="PIRSF000548">
    <property type="entry name" value="PK_regulatory"/>
    <property type="match status" value="1"/>
</dbReference>
<dbReference type="PRINTS" id="PR00103">
    <property type="entry name" value="CAMPKINASE"/>
</dbReference>
<dbReference type="SMART" id="SM00100">
    <property type="entry name" value="cNMP"/>
    <property type="match status" value="2"/>
</dbReference>
<dbReference type="SMART" id="SM00394">
    <property type="entry name" value="RIIa"/>
    <property type="match status" value="1"/>
</dbReference>
<dbReference type="SUPFAM" id="SSF51206">
    <property type="entry name" value="cAMP-binding domain-like"/>
    <property type="match status" value="2"/>
</dbReference>
<dbReference type="SUPFAM" id="SSF47391">
    <property type="entry name" value="Dimerization-anchoring domain of cAMP-dependent PK regulatory subunit"/>
    <property type="match status" value="1"/>
</dbReference>
<dbReference type="PROSITE" id="PS00888">
    <property type="entry name" value="CNMP_BINDING_1"/>
    <property type="match status" value="2"/>
</dbReference>
<dbReference type="PROSITE" id="PS00889">
    <property type="entry name" value="CNMP_BINDING_2"/>
    <property type="match status" value="2"/>
</dbReference>
<dbReference type="PROSITE" id="PS50042">
    <property type="entry name" value="CNMP_BINDING_3"/>
    <property type="match status" value="2"/>
</dbReference>
<organism>
    <name type="scientific">Homo sapiens</name>
    <name type="common">Human</name>
    <dbReference type="NCBI Taxonomy" id="9606"/>
    <lineage>
        <taxon>Eukaryota</taxon>
        <taxon>Metazoa</taxon>
        <taxon>Chordata</taxon>
        <taxon>Craniata</taxon>
        <taxon>Vertebrata</taxon>
        <taxon>Euteleostomi</taxon>
        <taxon>Mammalia</taxon>
        <taxon>Eutheria</taxon>
        <taxon>Euarchontoglires</taxon>
        <taxon>Primates</taxon>
        <taxon>Haplorrhini</taxon>
        <taxon>Catarrhini</taxon>
        <taxon>Hominidae</taxon>
        <taxon>Homo</taxon>
    </lineage>
</organism>
<sequence>MSIEIPAGLTELLQGFTVEVLRHQPADLLEFALQHFTRLQQENERKGTARFGHEGRTWGDLGAAAGGGTPSKGVNFAEEPMQSDSEDGEEEEAAPADAGAFNAPVINRFTRRASVCAEAYNPDEEEDDAESRIIHPKTDDQRNRLQEACKDILLFKNLDPEQMSQVLDAMFEKLVKDGEHVIDQGDDGDNFYVIDRGTFDIYVKCDGVGRCVGNYDNRGSFGELALMYNTPRAATITATSPGALWGLDRVTFRRIIVKNNAKKRKMYESFIESLPFLKSLEFSERLKVVDVIGTKVYNDGEQIIAQGDSADSFFIVESGEVKITMKRKGKSEVEENGAVEIARCSRGQYFGELALVTNKPRAASAHAIGTVKCLAMDVQAFERLLGPCMEIMKRNIATYEEQLVALFGTNMDIVEPTA</sequence>
<keyword id="KW-0114">cAMP</keyword>
<keyword id="KW-0116">cAMP-binding</keyword>
<keyword id="KW-1003">Cell membrane</keyword>
<keyword id="KW-0963">Cytoplasm</keyword>
<keyword id="KW-0472">Membrane</keyword>
<keyword id="KW-0547">Nucleotide-binding</keyword>
<keyword id="KW-0597">Phosphoprotein</keyword>
<keyword id="KW-1267">Proteomics identification</keyword>
<keyword id="KW-1185">Reference proteome</keyword>
<keyword id="KW-0677">Repeat</keyword>
<evidence type="ECO:0000256" key="1">
    <source>
        <dbReference type="SAM" id="MobiDB-lite"/>
    </source>
</evidence>
<evidence type="ECO:0000269" key="2">
    <source>
    </source>
</evidence>
<evidence type="ECO:0000269" key="3">
    <source>
    </source>
</evidence>
<evidence type="ECO:0000269" key="4">
    <source>
    </source>
</evidence>
<evidence type="ECO:0000305" key="5"/>
<evidence type="ECO:0007744" key="6">
    <source>
    </source>
</evidence>
<evidence type="ECO:0007744" key="7">
    <source>
    </source>
</evidence>
<evidence type="ECO:0007744" key="8">
    <source>
    </source>
</evidence>
<evidence type="ECO:0007744" key="9">
    <source>
    </source>
</evidence>
<proteinExistence type="evidence at protein level"/>
<protein>
    <recommendedName>
        <fullName>cAMP-dependent protein kinase type II-beta regulatory subunit</fullName>
    </recommendedName>
</protein>
<feature type="chain" id="PRO_0000205390" description="cAMP-dependent protein kinase type II-beta regulatory subunit">
    <location>
        <begin position="1"/>
        <end position="418"/>
    </location>
</feature>
<feature type="region of interest" description="Dimerization and phosphorylation">
    <location>
        <begin position="2"/>
        <end position="153"/>
    </location>
</feature>
<feature type="region of interest" description="Disordered" evidence="1">
    <location>
        <begin position="48"/>
        <end position="96"/>
    </location>
</feature>
<feature type="compositionally biased region" description="Basic and acidic residues" evidence="1">
    <location>
        <begin position="48"/>
        <end position="57"/>
    </location>
</feature>
<feature type="compositionally biased region" description="Acidic residues" evidence="1">
    <location>
        <begin position="84"/>
        <end position="94"/>
    </location>
</feature>
<feature type="binding site">
    <location>
        <begin position="154"/>
        <end position="275"/>
    </location>
    <ligand>
        <name>3',5'-cyclic AMP</name>
        <dbReference type="ChEBI" id="CHEBI:58165"/>
        <label>1</label>
    </ligand>
</feature>
<feature type="binding site">
    <location>
        <position position="223"/>
    </location>
    <ligand>
        <name>3',5'-cyclic AMP</name>
        <dbReference type="ChEBI" id="CHEBI:58165"/>
        <label>1</label>
    </ligand>
</feature>
<feature type="binding site">
    <location>
        <position position="232"/>
    </location>
    <ligand>
        <name>3',5'-cyclic AMP</name>
        <dbReference type="ChEBI" id="CHEBI:58165"/>
        <label>1</label>
    </ligand>
</feature>
<feature type="binding site">
    <location>
        <begin position="276"/>
        <end position="418"/>
    </location>
    <ligand>
        <name>3',5'-cyclic AMP</name>
        <dbReference type="ChEBI" id="CHEBI:58165"/>
        <label>2</label>
    </ligand>
</feature>
<feature type="binding site">
    <location>
        <position position="352"/>
    </location>
    <ligand>
        <name>3',5'-cyclic AMP</name>
        <dbReference type="ChEBI" id="CHEBI:58165"/>
        <label>2</label>
    </ligand>
</feature>
<feature type="binding site">
    <location>
        <position position="361"/>
    </location>
    <ligand>
        <name>3',5'-cyclic AMP</name>
        <dbReference type="ChEBI" id="CHEBI:58165"/>
        <label>2</label>
    </ligand>
</feature>
<feature type="modified residue" description="Phosphothreonine" evidence="9">
    <location>
        <position position="69"/>
    </location>
</feature>
<feature type="modified residue" description="Phosphoserine" evidence="8">
    <location>
        <position position="83"/>
    </location>
</feature>
<feature type="modified residue" description="Phosphoserine" evidence="8">
    <location>
        <position position="85"/>
    </location>
</feature>
<feature type="modified residue" description="Phosphoserine" evidence="6 7 8 9">
    <location>
        <position position="114"/>
    </location>
</feature>
<feature type="sequence variant" id="VAR_046549" description="In dbSNP:rs3729881.">
    <original>E</original>
    <variation>D</variation>
    <location>
        <position position="335"/>
    </location>
</feature>
<feature type="sequence conflict" description="In Ref. 1; AAA60099." evidence="5" ref="1">
    <original>IA</original>
    <variation>MP</variation>
    <location>
        <begin position="341"/>
        <end position="342"/>
    </location>
</feature>